<name>THIC_BACP2</name>
<reference key="1">
    <citation type="journal article" date="2007" name="PLoS ONE">
        <title>Paradoxical DNA repair and peroxide resistance gene conservation in Bacillus pumilus SAFR-032.</title>
        <authorList>
            <person name="Gioia J."/>
            <person name="Yerrapragada S."/>
            <person name="Qin X."/>
            <person name="Jiang H."/>
            <person name="Igboeli O.C."/>
            <person name="Muzny D."/>
            <person name="Dugan-Rocha S."/>
            <person name="Ding Y."/>
            <person name="Hawes A."/>
            <person name="Liu W."/>
            <person name="Perez L."/>
            <person name="Kovar C."/>
            <person name="Dinh H."/>
            <person name="Lee S."/>
            <person name="Nazareth L."/>
            <person name="Blyth P."/>
            <person name="Holder M."/>
            <person name="Buhay C."/>
            <person name="Tirumalai M.R."/>
            <person name="Liu Y."/>
            <person name="Dasgupta I."/>
            <person name="Bokhetache L."/>
            <person name="Fujita M."/>
            <person name="Karouia F."/>
            <person name="Eswara Moorthy P."/>
            <person name="Siefert J."/>
            <person name="Uzman A."/>
            <person name="Buzumbo P."/>
            <person name="Verma A."/>
            <person name="Zwiya H."/>
            <person name="McWilliams B.D."/>
            <person name="Olowu A."/>
            <person name="Clinkenbeard K.D."/>
            <person name="Newcombe D."/>
            <person name="Golebiewski L."/>
            <person name="Petrosino J.F."/>
            <person name="Nicholson W.L."/>
            <person name="Fox G.E."/>
            <person name="Venkateswaran K."/>
            <person name="Highlander S.K."/>
            <person name="Weinstock G.M."/>
        </authorList>
    </citation>
    <scope>NUCLEOTIDE SEQUENCE [LARGE SCALE GENOMIC DNA]</scope>
    <source>
        <strain>SAFR-032</strain>
    </source>
</reference>
<protein>
    <recommendedName>
        <fullName evidence="1">Phosphomethylpyrimidine synthase</fullName>
        <ecNumber evidence="1">4.1.99.17</ecNumber>
    </recommendedName>
    <alternativeName>
        <fullName evidence="1">Hydroxymethylpyrimidine phosphate synthase</fullName>
        <shortName evidence="1">HMP-P synthase</shortName>
        <shortName evidence="1">HMP-phosphate synthase</shortName>
        <shortName evidence="1">HMPP synthase</shortName>
    </alternativeName>
    <alternativeName>
        <fullName evidence="1">Thiamine biosynthesis protein ThiC</fullName>
    </alternativeName>
</protein>
<comment type="function">
    <text evidence="1">Catalyzes the synthesis of the hydroxymethylpyrimidine phosphate (HMP-P) moiety of thiamine from aminoimidazole ribotide (AIR) in a radical S-adenosyl-L-methionine (SAM)-dependent reaction.</text>
</comment>
<comment type="catalytic activity">
    <reaction evidence="1">
        <text>5-amino-1-(5-phospho-beta-D-ribosyl)imidazole + S-adenosyl-L-methionine = 4-amino-2-methyl-5-(phosphooxymethyl)pyrimidine + CO + 5'-deoxyadenosine + formate + L-methionine + 3 H(+)</text>
        <dbReference type="Rhea" id="RHEA:24840"/>
        <dbReference type="ChEBI" id="CHEBI:15378"/>
        <dbReference type="ChEBI" id="CHEBI:15740"/>
        <dbReference type="ChEBI" id="CHEBI:17245"/>
        <dbReference type="ChEBI" id="CHEBI:17319"/>
        <dbReference type="ChEBI" id="CHEBI:57844"/>
        <dbReference type="ChEBI" id="CHEBI:58354"/>
        <dbReference type="ChEBI" id="CHEBI:59789"/>
        <dbReference type="ChEBI" id="CHEBI:137981"/>
        <dbReference type="EC" id="4.1.99.17"/>
    </reaction>
</comment>
<comment type="cofactor">
    <cofactor evidence="1">
        <name>[4Fe-4S] cluster</name>
        <dbReference type="ChEBI" id="CHEBI:49883"/>
    </cofactor>
    <text evidence="1">Binds 1 [4Fe-4S] cluster per subunit. The cluster is coordinated with 3 cysteines and an exchangeable S-adenosyl-L-methionine.</text>
</comment>
<comment type="pathway">
    <text evidence="1">Cofactor biosynthesis; thiamine diphosphate biosynthesis.</text>
</comment>
<comment type="similarity">
    <text evidence="1">Belongs to the ThiC family.</text>
</comment>
<accession>A8FFR8</accession>
<evidence type="ECO:0000255" key="1">
    <source>
        <dbReference type="HAMAP-Rule" id="MF_00089"/>
    </source>
</evidence>
<evidence type="ECO:0000256" key="2">
    <source>
        <dbReference type="SAM" id="MobiDB-lite"/>
    </source>
</evidence>
<gene>
    <name evidence="1" type="primary">thiC</name>
    <name type="ordered locus">BPUM_2421</name>
</gene>
<sequence length="585" mass="65693">MKEKKNIPTTQSLLSSFDGSRKVYEKGSRPDILVPKREIALTQTVTQAGMIQNEPIRVYDTSGPYTDEHAHIDVTKGLNRLRAAWVEERGDTESYEGRHVKPEDNGYRSRNGSHQHIHTDFHHKPLRAKQGACVTQMHYAKKGIVTPEMEFIALREGLSPEFVREEVASGRAVIPANINHPESEPMIIGRNFHVKINANIGNSAVTSSIDEEVEKMTWAIRWGTDTMMDLSTGKDIHTTREWIIRNCPVPVGTVPIYQALEKVNGVAEDLTWDVYRDTLIEQAEQGVDYFTIHAGVRLRYIPLTVDRVTGIVSRGGAIMARWCLAHHQENFLYTHFEDICEIMKTYDIAFSLGDGLRPGSIADANDEAQFAELETLGELTEIAWKHDVQVMIEGPGHVPMDKIKENVDKQMEICKEAPFYTLGPLTTDIAPGYDHITSAIGAAMIGWYGTAMLCYVTPKEHLGLPNKEDVREGVIAYKIAAHAADLAKGHPAAQKRDDALSKARFEFRWRDQFNLSLDPERAMAFHDETLPAEGAKTAHFCSMCGPKFCSMKISHDIRNQSEEVKKEMEKKAKEFISGGSQIYSS</sequence>
<dbReference type="EC" id="4.1.99.17" evidence="1"/>
<dbReference type="EMBL" id="CP000813">
    <property type="protein sequence ID" value="ABV63085.1"/>
    <property type="molecule type" value="Genomic_DNA"/>
</dbReference>
<dbReference type="RefSeq" id="WP_012010748.1">
    <property type="nucleotide sequence ID" value="NC_009848.4"/>
</dbReference>
<dbReference type="SMR" id="A8FFR8"/>
<dbReference type="STRING" id="315750.BPUM_2421"/>
<dbReference type="GeneID" id="5621684"/>
<dbReference type="KEGG" id="bpu:BPUM_2421"/>
<dbReference type="eggNOG" id="COG0422">
    <property type="taxonomic scope" value="Bacteria"/>
</dbReference>
<dbReference type="HOGENOM" id="CLU_013181_2_1_9"/>
<dbReference type="OrthoDB" id="9805897at2"/>
<dbReference type="UniPathway" id="UPA00060"/>
<dbReference type="Proteomes" id="UP000001355">
    <property type="component" value="Chromosome"/>
</dbReference>
<dbReference type="GO" id="GO:0005829">
    <property type="term" value="C:cytosol"/>
    <property type="evidence" value="ECO:0007669"/>
    <property type="project" value="TreeGrafter"/>
</dbReference>
<dbReference type="GO" id="GO:0051539">
    <property type="term" value="F:4 iron, 4 sulfur cluster binding"/>
    <property type="evidence" value="ECO:0007669"/>
    <property type="project" value="UniProtKB-KW"/>
</dbReference>
<dbReference type="GO" id="GO:0016830">
    <property type="term" value="F:carbon-carbon lyase activity"/>
    <property type="evidence" value="ECO:0007669"/>
    <property type="project" value="InterPro"/>
</dbReference>
<dbReference type="GO" id="GO:0008270">
    <property type="term" value="F:zinc ion binding"/>
    <property type="evidence" value="ECO:0007669"/>
    <property type="project" value="UniProtKB-UniRule"/>
</dbReference>
<dbReference type="GO" id="GO:0009228">
    <property type="term" value="P:thiamine biosynthetic process"/>
    <property type="evidence" value="ECO:0007669"/>
    <property type="project" value="UniProtKB-KW"/>
</dbReference>
<dbReference type="GO" id="GO:0009229">
    <property type="term" value="P:thiamine diphosphate biosynthetic process"/>
    <property type="evidence" value="ECO:0007669"/>
    <property type="project" value="UniProtKB-UniRule"/>
</dbReference>
<dbReference type="FunFam" id="3.20.20.540:FF:000001">
    <property type="entry name" value="Phosphomethylpyrimidine synthase"/>
    <property type="match status" value="1"/>
</dbReference>
<dbReference type="Gene3D" id="6.10.250.620">
    <property type="match status" value="1"/>
</dbReference>
<dbReference type="Gene3D" id="3.20.20.540">
    <property type="entry name" value="Radical SAM ThiC family, central domain"/>
    <property type="match status" value="1"/>
</dbReference>
<dbReference type="HAMAP" id="MF_00089">
    <property type="entry name" value="ThiC"/>
    <property type="match status" value="1"/>
</dbReference>
<dbReference type="InterPro" id="IPR037509">
    <property type="entry name" value="ThiC"/>
</dbReference>
<dbReference type="InterPro" id="IPR025747">
    <property type="entry name" value="ThiC-associated_dom"/>
</dbReference>
<dbReference type="InterPro" id="IPR038521">
    <property type="entry name" value="ThiC/Bza_core_dom"/>
</dbReference>
<dbReference type="InterPro" id="IPR002817">
    <property type="entry name" value="ThiC/BzaA/B"/>
</dbReference>
<dbReference type="NCBIfam" id="NF006763">
    <property type="entry name" value="PRK09284.1"/>
    <property type="match status" value="1"/>
</dbReference>
<dbReference type="NCBIfam" id="NF009895">
    <property type="entry name" value="PRK13352.1"/>
    <property type="match status" value="1"/>
</dbReference>
<dbReference type="NCBIfam" id="TIGR00190">
    <property type="entry name" value="thiC"/>
    <property type="match status" value="1"/>
</dbReference>
<dbReference type="PANTHER" id="PTHR30557:SF1">
    <property type="entry name" value="PHOSPHOMETHYLPYRIMIDINE SYNTHASE, CHLOROPLASTIC"/>
    <property type="match status" value="1"/>
</dbReference>
<dbReference type="PANTHER" id="PTHR30557">
    <property type="entry name" value="THIAMINE BIOSYNTHESIS PROTEIN THIC"/>
    <property type="match status" value="1"/>
</dbReference>
<dbReference type="Pfam" id="PF13667">
    <property type="entry name" value="ThiC-associated"/>
    <property type="match status" value="1"/>
</dbReference>
<dbReference type="Pfam" id="PF01964">
    <property type="entry name" value="ThiC_Rad_SAM"/>
    <property type="match status" value="1"/>
</dbReference>
<dbReference type="SFLD" id="SFLDF00407">
    <property type="entry name" value="phosphomethylpyrimidine_syntha"/>
    <property type="match status" value="1"/>
</dbReference>
<dbReference type="SFLD" id="SFLDG01114">
    <property type="entry name" value="phosphomethylpyrimidine_syntha"/>
    <property type="match status" value="1"/>
</dbReference>
<dbReference type="SFLD" id="SFLDS00113">
    <property type="entry name" value="Radical_SAM_Phosphomethylpyrim"/>
    <property type="match status" value="1"/>
</dbReference>
<organism>
    <name type="scientific">Bacillus pumilus (strain SAFR-032)</name>
    <dbReference type="NCBI Taxonomy" id="315750"/>
    <lineage>
        <taxon>Bacteria</taxon>
        <taxon>Bacillati</taxon>
        <taxon>Bacillota</taxon>
        <taxon>Bacilli</taxon>
        <taxon>Bacillales</taxon>
        <taxon>Bacillaceae</taxon>
        <taxon>Bacillus</taxon>
    </lineage>
</organism>
<proteinExistence type="inferred from homology"/>
<keyword id="KW-0004">4Fe-4S</keyword>
<keyword id="KW-0408">Iron</keyword>
<keyword id="KW-0411">Iron-sulfur</keyword>
<keyword id="KW-0456">Lyase</keyword>
<keyword id="KW-0479">Metal-binding</keyword>
<keyword id="KW-0949">S-adenosyl-L-methionine</keyword>
<keyword id="KW-0784">Thiamine biosynthesis</keyword>
<keyword id="KW-0862">Zinc</keyword>
<feature type="chain" id="PRO_1000057587" description="Phosphomethylpyrimidine synthase">
    <location>
        <begin position="1"/>
        <end position="585"/>
    </location>
</feature>
<feature type="region of interest" description="Disordered" evidence="2">
    <location>
        <begin position="89"/>
        <end position="116"/>
    </location>
</feature>
<feature type="compositionally biased region" description="Basic and acidic residues" evidence="2">
    <location>
        <begin position="89"/>
        <end position="107"/>
    </location>
</feature>
<feature type="binding site" evidence="1">
    <location>
        <position position="199"/>
    </location>
    <ligand>
        <name>substrate</name>
    </ligand>
</feature>
<feature type="binding site" evidence="1">
    <location>
        <position position="228"/>
    </location>
    <ligand>
        <name>substrate</name>
    </ligand>
</feature>
<feature type="binding site" evidence="1">
    <location>
        <position position="257"/>
    </location>
    <ligand>
        <name>substrate</name>
    </ligand>
</feature>
<feature type="binding site" evidence="1">
    <location>
        <position position="293"/>
    </location>
    <ligand>
        <name>substrate</name>
    </ligand>
</feature>
<feature type="binding site" evidence="1">
    <location>
        <begin position="313"/>
        <end position="315"/>
    </location>
    <ligand>
        <name>substrate</name>
    </ligand>
</feature>
<feature type="binding site" evidence="1">
    <location>
        <begin position="354"/>
        <end position="357"/>
    </location>
    <ligand>
        <name>substrate</name>
    </ligand>
</feature>
<feature type="binding site" evidence="1">
    <location>
        <position position="393"/>
    </location>
    <ligand>
        <name>substrate</name>
    </ligand>
</feature>
<feature type="binding site" evidence="1">
    <location>
        <position position="397"/>
    </location>
    <ligand>
        <name>Zn(2+)</name>
        <dbReference type="ChEBI" id="CHEBI:29105"/>
    </ligand>
</feature>
<feature type="binding site" evidence="1">
    <location>
        <position position="420"/>
    </location>
    <ligand>
        <name>substrate</name>
    </ligand>
</feature>
<feature type="binding site" evidence="1">
    <location>
        <position position="461"/>
    </location>
    <ligand>
        <name>Zn(2+)</name>
        <dbReference type="ChEBI" id="CHEBI:29105"/>
    </ligand>
</feature>
<feature type="binding site" evidence="1">
    <location>
        <position position="541"/>
    </location>
    <ligand>
        <name>[4Fe-4S] cluster</name>
        <dbReference type="ChEBI" id="CHEBI:49883"/>
        <note>4Fe-4S-S-AdoMet</note>
    </ligand>
</feature>
<feature type="binding site" evidence="1">
    <location>
        <position position="544"/>
    </location>
    <ligand>
        <name>[4Fe-4S] cluster</name>
        <dbReference type="ChEBI" id="CHEBI:49883"/>
        <note>4Fe-4S-S-AdoMet</note>
    </ligand>
</feature>
<feature type="binding site" evidence="1">
    <location>
        <position position="549"/>
    </location>
    <ligand>
        <name>[4Fe-4S] cluster</name>
        <dbReference type="ChEBI" id="CHEBI:49883"/>
        <note>4Fe-4S-S-AdoMet</note>
    </ligand>
</feature>